<feature type="chain" id="PRO_0000299683" description="Putative uncharacterized protein Q0143, mitochondrial">
    <location>
        <begin position="1"/>
        <end position="50"/>
    </location>
</feature>
<proteinExistence type="uncertain"/>
<name>Q0143_YEAST</name>
<geneLocation type="mitochondrion"/>
<sequence length="50" mass="5940">MGLWISFGTPPSYTYLLIMNHKLLLINNNNLTEVHTYFNININIDKMYIH</sequence>
<accession>Q9ZZW3</accession>
<protein>
    <recommendedName>
        <fullName>Putative uncharacterized protein Q0143, mitochondrial</fullName>
    </recommendedName>
</protein>
<dbReference type="EMBL" id="KP263414">
    <property type="status" value="NOT_ANNOTATED_CDS"/>
    <property type="molecule type" value="Genomic_DNA"/>
</dbReference>
<dbReference type="PIR" id="S78674">
    <property type="entry name" value="S78674"/>
</dbReference>
<dbReference type="STRING" id="4932.Q0143"/>
<dbReference type="PaxDb" id="4932-Q0143"/>
<dbReference type="EnsemblFungi" id="Q0143_mRNA">
    <property type="protein sequence ID" value="Q0143"/>
    <property type="gene ID" value="Q0143"/>
</dbReference>
<dbReference type="AGR" id="SGD:S000007277"/>
<dbReference type="SGD" id="S000007277">
    <property type="gene designation" value="Q0143"/>
</dbReference>
<dbReference type="HOGENOM" id="CLU_3126152_0_0_1"/>
<dbReference type="InParanoid" id="Q9ZZW3"/>
<dbReference type="Proteomes" id="UP000002311">
    <property type="component" value="Mitochondrion"/>
</dbReference>
<dbReference type="GO" id="GO:0005739">
    <property type="term" value="C:mitochondrion"/>
    <property type="evidence" value="ECO:0007669"/>
    <property type="project" value="UniProtKB-SubCell"/>
</dbReference>
<comment type="subcellular location">
    <subcellularLocation>
        <location evidence="1">Mitochondrion</location>
    </subcellularLocation>
</comment>
<comment type="caution">
    <text evidence="1">Product of a dubious gene prediction.</text>
</comment>
<reference key="1">
    <citation type="journal article" date="1998" name="FEBS Lett.">
        <title>The complete sequence of the mitochondrial genome of Saccharomyces cerevisiae.</title>
        <authorList>
            <person name="Foury F."/>
            <person name="Roganti T."/>
            <person name="Lecrenier N."/>
            <person name="Purnelle B."/>
        </authorList>
    </citation>
    <scope>NUCLEOTIDE SEQUENCE [LARGE SCALE GENOMIC DNA]</scope>
    <source>
        <strain>ATCC 96604 / S288c / FY1679</strain>
    </source>
</reference>
<reference key="2">
    <citation type="journal article" date="2014" name="G3 (Bethesda)">
        <title>The reference genome sequence of Saccharomyces cerevisiae: Then and now.</title>
        <authorList>
            <person name="Engel S.R."/>
            <person name="Dietrich F.S."/>
            <person name="Fisk D.G."/>
            <person name="Binkley G."/>
            <person name="Balakrishnan R."/>
            <person name="Costanzo M.C."/>
            <person name="Dwight S.S."/>
            <person name="Hitz B.C."/>
            <person name="Karra K."/>
            <person name="Nash R.S."/>
            <person name="Weng S."/>
            <person name="Wong E.D."/>
            <person name="Lloyd P."/>
            <person name="Skrzypek M.S."/>
            <person name="Miyasato S.R."/>
            <person name="Simison M."/>
            <person name="Cherry J.M."/>
        </authorList>
    </citation>
    <scope>GENOME REANNOTATION</scope>
    <source>
        <strain>ATCC 96604 / S288c / FY1679</strain>
    </source>
</reference>
<keyword id="KW-0496">Mitochondrion</keyword>
<keyword id="KW-1185">Reference proteome</keyword>
<evidence type="ECO:0000305" key="1"/>
<gene>
    <name type="ordered locus">Q0143</name>
    <name type="ORF">ORF10</name>
</gene>
<organism>
    <name type="scientific">Saccharomyces cerevisiae (strain ATCC 204508 / S288c)</name>
    <name type="common">Baker's yeast</name>
    <dbReference type="NCBI Taxonomy" id="559292"/>
    <lineage>
        <taxon>Eukaryota</taxon>
        <taxon>Fungi</taxon>
        <taxon>Dikarya</taxon>
        <taxon>Ascomycota</taxon>
        <taxon>Saccharomycotina</taxon>
        <taxon>Saccharomycetes</taxon>
        <taxon>Saccharomycetales</taxon>
        <taxon>Saccharomycetaceae</taxon>
        <taxon>Saccharomyces</taxon>
    </lineage>
</organism>